<organism>
    <name type="scientific">Cytophaga hutchinsonii (strain ATCC 33406 / DSM 1761 / CIP 103989 / NBRC 15051 / NCIMB 9469 / D465)</name>
    <dbReference type="NCBI Taxonomy" id="269798"/>
    <lineage>
        <taxon>Bacteria</taxon>
        <taxon>Pseudomonadati</taxon>
        <taxon>Bacteroidota</taxon>
        <taxon>Cytophagia</taxon>
        <taxon>Cytophagales</taxon>
        <taxon>Cytophagaceae</taxon>
        <taxon>Cytophaga</taxon>
    </lineage>
</organism>
<feature type="chain" id="PRO_0000302504" description="ATP-dependent dethiobiotin synthetase BioD">
    <location>
        <begin position="1"/>
        <end position="206"/>
    </location>
</feature>
<feature type="active site" evidence="1">
    <location>
        <position position="32"/>
    </location>
</feature>
<feature type="binding site" evidence="1">
    <location>
        <begin position="12"/>
        <end position="17"/>
    </location>
    <ligand>
        <name>ATP</name>
        <dbReference type="ChEBI" id="CHEBI:30616"/>
    </ligand>
</feature>
<feature type="binding site" evidence="1">
    <location>
        <position position="16"/>
    </location>
    <ligand>
        <name>Mg(2+)</name>
        <dbReference type="ChEBI" id="CHEBI:18420"/>
    </ligand>
</feature>
<feature type="binding site" evidence="1">
    <location>
        <begin position="99"/>
        <end position="102"/>
    </location>
    <ligand>
        <name>ATP</name>
        <dbReference type="ChEBI" id="CHEBI:30616"/>
    </ligand>
</feature>
<feature type="binding site" evidence="1">
    <location>
        <position position="99"/>
    </location>
    <ligand>
        <name>Mg(2+)</name>
        <dbReference type="ChEBI" id="CHEBI:18420"/>
    </ligand>
</feature>
<sequence length="206" mass="22683">MKKYFITAISTDSGKTLVSAILTNALQADYWKPVQAGLEETDSNTIRTLLHSGHSIIHPEAYALKQAVSPHAAARNEGVEIVLAAIQLPDTNGNDLIIEGAGGVLVPLNDTDVVADLITQFDAEVILVSNLYLGSINHTLLTAQELKRRNIRVKGIVFNGPRNEESERIILKHTGYKVLLHVSPEEKITKEVVTAYAVKLFDNWYE</sequence>
<protein>
    <recommendedName>
        <fullName evidence="1">ATP-dependent dethiobiotin synthetase BioD</fullName>
        <ecNumber evidence="1">6.3.3.3</ecNumber>
    </recommendedName>
    <alternativeName>
        <fullName evidence="1">DTB synthetase</fullName>
        <shortName evidence="1">DTBS</shortName>
    </alternativeName>
    <alternativeName>
        <fullName evidence="1">Dethiobiotin synthase</fullName>
    </alternativeName>
</protein>
<reference key="1">
    <citation type="journal article" date="2007" name="Appl. Environ. Microbiol.">
        <title>Genome sequence of the cellulolytic gliding bacterium Cytophaga hutchinsonii.</title>
        <authorList>
            <person name="Xie G."/>
            <person name="Bruce D.C."/>
            <person name="Challacombe J.F."/>
            <person name="Chertkov O."/>
            <person name="Detter J.C."/>
            <person name="Gilna P."/>
            <person name="Han C.S."/>
            <person name="Lucas S."/>
            <person name="Misra M."/>
            <person name="Myers G.L."/>
            <person name="Richardson P."/>
            <person name="Tapia R."/>
            <person name="Thayer N."/>
            <person name="Thompson L.S."/>
            <person name="Brettin T.S."/>
            <person name="Henrissat B."/>
            <person name="Wilson D.B."/>
            <person name="McBride M.J."/>
        </authorList>
    </citation>
    <scope>NUCLEOTIDE SEQUENCE [LARGE SCALE GENOMIC DNA]</scope>
    <source>
        <strain>ATCC 33406 / DSM 1761 / JCM 20678 / CIP 103989 / IAM 12607 / NBRC 15051 / NCIMB 9469 / D465</strain>
    </source>
</reference>
<proteinExistence type="inferred from homology"/>
<dbReference type="EC" id="6.3.3.3" evidence="1"/>
<dbReference type="EMBL" id="CP000383">
    <property type="protein sequence ID" value="ABG60218.1"/>
    <property type="molecule type" value="Genomic_DNA"/>
</dbReference>
<dbReference type="RefSeq" id="WP_011586328.1">
    <property type="nucleotide sequence ID" value="NC_008255.1"/>
</dbReference>
<dbReference type="SMR" id="Q11QU6"/>
<dbReference type="STRING" id="269798.CHU_2977"/>
<dbReference type="KEGG" id="chu:CHU_2977"/>
<dbReference type="eggNOG" id="COG0132">
    <property type="taxonomic scope" value="Bacteria"/>
</dbReference>
<dbReference type="HOGENOM" id="CLU_072551_2_0_10"/>
<dbReference type="OrthoDB" id="9802097at2"/>
<dbReference type="UniPathway" id="UPA00078">
    <property type="reaction ID" value="UER00161"/>
</dbReference>
<dbReference type="Proteomes" id="UP000001822">
    <property type="component" value="Chromosome"/>
</dbReference>
<dbReference type="GO" id="GO:0005829">
    <property type="term" value="C:cytosol"/>
    <property type="evidence" value="ECO:0007669"/>
    <property type="project" value="TreeGrafter"/>
</dbReference>
<dbReference type="GO" id="GO:0005524">
    <property type="term" value="F:ATP binding"/>
    <property type="evidence" value="ECO:0007669"/>
    <property type="project" value="UniProtKB-UniRule"/>
</dbReference>
<dbReference type="GO" id="GO:0004141">
    <property type="term" value="F:dethiobiotin synthase activity"/>
    <property type="evidence" value="ECO:0007669"/>
    <property type="project" value="UniProtKB-UniRule"/>
</dbReference>
<dbReference type="GO" id="GO:0000287">
    <property type="term" value="F:magnesium ion binding"/>
    <property type="evidence" value="ECO:0007669"/>
    <property type="project" value="UniProtKB-UniRule"/>
</dbReference>
<dbReference type="GO" id="GO:0009102">
    <property type="term" value="P:biotin biosynthetic process"/>
    <property type="evidence" value="ECO:0007669"/>
    <property type="project" value="UniProtKB-UniRule"/>
</dbReference>
<dbReference type="CDD" id="cd03109">
    <property type="entry name" value="DTBS"/>
    <property type="match status" value="1"/>
</dbReference>
<dbReference type="Gene3D" id="3.40.50.300">
    <property type="entry name" value="P-loop containing nucleotide triphosphate hydrolases"/>
    <property type="match status" value="1"/>
</dbReference>
<dbReference type="HAMAP" id="MF_00336">
    <property type="entry name" value="BioD"/>
    <property type="match status" value="1"/>
</dbReference>
<dbReference type="InterPro" id="IPR004472">
    <property type="entry name" value="DTB_synth_BioD"/>
</dbReference>
<dbReference type="InterPro" id="IPR027417">
    <property type="entry name" value="P-loop_NTPase"/>
</dbReference>
<dbReference type="NCBIfam" id="TIGR00347">
    <property type="entry name" value="bioD"/>
    <property type="match status" value="1"/>
</dbReference>
<dbReference type="PANTHER" id="PTHR43210">
    <property type="entry name" value="DETHIOBIOTIN SYNTHETASE"/>
    <property type="match status" value="1"/>
</dbReference>
<dbReference type="PANTHER" id="PTHR43210:SF5">
    <property type="entry name" value="DETHIOBIOTIN SYNTHETASE"/>
    <property type="match status" value="1"/>
</dbReference>
<dbReference type="Pfam" id="PF13500">
    <property type="entry name" value="AAA_26"/>
    <property type="match status" value="1"/>
</dbReference>
<dbReference type="PIRSF" id="PIRSF006755">
    <property type="entry name" value="DTB_synth"/>
    <property type="match status" value="1"/>
</dbReference>
<dbReference type="SUPFAM" id="SSF52540">
    <property type="entry name" value="P-loop containing nucleoside triphosphate hydrolases"/>
    <property type="match status" value="1"/>
</dbReference>
<keyword id="KW-0067">ATP-binding</keyword>
<keyword id="KW-0093">Biotin biosynthesis</keyword>
<keyword id="KW-0963">Cytoplasm</keyword>
<keyword id="KW-0436">Ligase</keyword>
<keyword id="KW-0460">Magnesium</keyword>
<keyword id="KW-0479">Metal-binding</keyword>
<keyword id="KW-0547">Nucleotide-binding</keyword>
<keyword id="KW-1185">Reference proteome</keyword>
<name>BIOD_CYTH3</name>
<comment type="function">
    <text evidence="1">Catalyzes a mechanistically unusual reaction, the ATP-dependent insertion of CO2 between the N7 and N8 nitrogen atoms of 7,8-diaminopelargonic acid (DAPA, also called 7,8-diammoniononanoate) to form a ureido ring.</text>
</comment>
<comment type="catalytic activity">
    <reaction evidence="1">
        <text>(7R,8S)-7,8-diammoniononanoate + CO2 + ATP = (4R,5S)-dethiobiotin + ADP + phosphate + 3 H(+)</text>
        <dbReference type="Rhea" id="RHEA:15805"/>
        <dbReference type="ChEBI" id="CHEBI:15378"/>
        <dbReference type="ChEBI" id="CHEBI:16526"/>
        <dbReference type="ChEBI" id="CHEBI:30616"/>
        <dbReference type="ChEBI" id="CHEBI:43474"/>
        <dbReference type="ChEBI" id="CHEBI:149469"/>
        <dbReference type="ChEBI" id="CHEBI:149473"/>
        <dbReference type="ChEBI" id="CHEBI:456216"/>
        <dbReference type="EC" id="6.3.3.3"/>
    </reaction>
</comment>
<comment type="cofactor">
    <cofactor evidence="1">
        <name>Mg(2+)</name>
        <dbReference type="ChEBI" id="CHEBI:18420"/>
    </cofactor>
</comment>
<comment type="pathway">
    <text evidence="1">Cofactor biosynthesis; biotin biosynthesis; biotin from 7,8-diaminononanoate: step 1/2.</text>
</comment>
<comment type="subunit">
    <text evidence="1">Homodimer.</text>
</comment>
<comment type="subcellular location">
    <subcellularLocation>
        <location evidence="1">Cytoplasm</location>
    </subcellularLocation>
</comment>
<comment type="similarity">
    <text evidence="1">Belongs to the dethiobiotin synthetase family.</text>
</comment>
<accession>Q11QU6</accession>
<gene>
    <name evidence="1" type="primary">bioD</name>
    <name type="ordered locus">CHU_2977</name>
</gene>
<evidence type="ECO:0000255" key="1">
    <source>
        <dbReference type="HAMAP-Rule" id="MF_00336"/>
    </source>
</evidence>